<dbReference type="EC" id="1.3.1.-" evidence="2"/>
<dbReference type="EMBL" id="JH470528">
    <property type="protein sequence ID" value="EHN14667.1"/>
    <property type="molecule type" value="Genomic_DNA"/>
</dbReference>
<dbReference type="RefSeq" id="WP_003493847.1">
    <property type="nucleotide sequence ID" value="NZ_JH470528.1"/>
</dbReference>
<dbReference type="SMR" id="G9F1Y9"/>
<dbReference type="HOGENOM" id="CLU_012153_1_1_9"/>
<dbReference type="UniPathway" id="UPA00139"/>
<dbReference type="GO" id="GO:0047540">
    <property type="term" value="F:2-enoate reductase activity"/>
    <property type="evidence" value="ECO:0000314"/>
    <property type="project" value="UniProtKB"/>
</dbReference>
<dbReference type="GO" id="GO:0043786">
    <property type="term" value="F:cinnamate reductase activity"/>
    <property type="evidence" value="ECO:0007669"/>
    <property type="project" value="RHEA"/>
</dbReference>
<dbReference type="GO" id="GO:0010181">
    <property type="term" value="F:FMN binding"/>
    <property type="evidence" value="ECO:0007669"/>
    <property type="project" value="InterPro"/>
</dbReference>
<dbReference type="GO" id="GO:0051536">
    <property type="term" value="F:iron-sulfur cluster binding"/>
    <property type="evidence" value="ECO:0007669"/>
    <property type="project" value="UniProtKB-KW"/>
</dbReference>
<dbReference type="GO" id="GO:0046872">
    <property type="term" value="F:metal ion binding"/>
    <property type="evidence" value="ECO:0007669"/>
    <property type="project" value="UniProtKB-KW"/>
</dbReference>
<dbReference type="GO" id="GO:0006559">
    <property type="term" value="P:L-phenylalanine catabolic process"/>
    <property type="evidence" value="ECO:0000315"/>
    <property type="project" value="UniProtKB"/>
</dbReference>
<dbReference type="FunFam" id="3.20.20.70:FF:000469">
    <property type="entry name" value="Cinnamate reductase"/>
    <property type="match status" value="1"/>
</dbReference>
<dbReference type="Gene3D" id="3.20.20.70">
    <property type="entry name" value="Aldolase class I"/>
    <property type="match status" value="1"/>
</dbReference>
<dbReference type="Gene3D" id="3.50.50.60">
    <property type="entry name" value="FAD/NAD(P)-binding domain"/>
    <property type="match status" value="1"/>
</dbReference>
<dbReference type="Gene3D" id="3.40.50.720">
    <property type="entry name" value="NAD(P)-binding Rossmann-like Domain"/>
    <property type="match status" value="1"/>
</dbReference>
<dbReference type="InterPro" id="IPR013785">
    <property type="entry name" value="Aldolase_TIM"/>
</dbReference>
<dbReference type="InterPro" id="IPR036188">
    <property type="entry name" value="FAD/NAD-bd_sf"/>
</dbReference>
<dbReference type="InterPro" id="IPR023753">
    <property type="entry name" value="FAD/NAD-binding_dom"/>
</dbReference>
<dbReference type="InterPro" id="IPR051793">
    <property type="entry name" value="NADH:flavin_oxidoreductase"/>
</dbReference>
<dbReference type="InterPro" id="IPR001155">
    <property type="entry name" value="OxRdtase_FMN_N"/>
</dbReference>
<dbReference type="PANTHER" id="PTHR42917">
    <property type="entry name" value="2,4-DIENOYL-COA REDUCTASE"/>
    <property type="match status" value="1"/>
</dbReference>
<dbReference type="PANTHER" id="PTHR42917:SF2">
    <property type="entry name" value="2,4-DIENOYL-COA REDUCTASE [(2E)-ENOYL-COA-PRODUCING]"/>
    <property type="match status" value="1"/>
</dbReference>
<dbReference type="Pfam" id="PF00724">
    <property type="entry name" value="Oxidored_FMN"/>
    <property type="match status" value="1"/>
</dbReference>
<dbReference type="Pfam" id="PF07992">
    <property type="entry name" value="Pyr_redox_2"/>
    <property type="match status" value="1"/>
</dbReference>
<dbReference type="PRINTS" id="PR00368">
    <property type="entry name" value="FADPNR"/>
</dbReference>
<dbReference type="SUPFAM" id="SSF51905">
    <property type="entry name" value="FAD/NAD(P)-binding domain"/>
    <property type="match status" value="1"/>
</dbReference>
<dbReference type="SUPFAM" id="SSF51395">
    <property type="entry name" value="FMN-linked oxidoreductases"/>
    <property type="match status" value="1"/>
</dbReference>
<gene>
    <name evidence="3" type="primary">fldZ</name>
    <name type="ORF">IYC_12859</name>
</gene>
<reference key="1">
    <citation type="submission" date="2011-08" db="EMBL/GenBank/DDBJ databases">
        <title>Whole genome shotgun sequencing of Clostridium 'sporogenes'.</title>
        <authorList>
            <person name="Bradbury M."/>
            <person name="Greenfield P."/>
            <person name="Midgley D."/>
            <person name="Li D."/>
            <person name="Tran-Dinh N."/>
            <person name="Brown J."/>
        </authorList>
    </citation>
    <scope>NUCLEOTIDE SEQUENCE [LARGE SCALE GENOMIC DNA]</scope>
    <source>
        <strain>ATCC 7955 / DSM 767 / NBRC 16411 / NCIMB 8053 / NCTC 8594 / PA 3679</strain>
    </source>
</reference>
<reference key="2">
    <citation type="journal article" date="2000" name="Eur. J. Biochem.">
        <title>The involvement of coenzyme A esters in the dehydration of (R)-phenyllactate to (E)-cinnamate by Clostridium sporogenes.</title>
        <authorList>
            <person name="Dickert S."/>
            <person name="Pierik A.J."/>
            <person name="Linder D."/>
            <person name="Buckel W."/>
        </authorList>
    </citation>
    <scope>PROTEIN SEQUENCE OF 1-20</scope>
    <scope>FUNCTION</scope>
    <scope>CATALYTIC ACTIVITY</scope>
    <scope>PATHWAY</scope>
    <source>
        <strain>ATCC 3584</strain>
    </source>
</reference>
<name>FLDZ_CLOS3</name>
<organism>
    <name type="scientific">Clostridium sporogenes (strain ATCC 7955 / DSM 767 / NBRC 16411 / NCIMB 8053 / NCTC 8594 / PA 3679)</name>
    <dbReference type="NCBI Taxonomy" id="1075091"/>
    <lineage>
        <taxon>Bacteria</taxon>
        <taxon>Bacillati</taxon>
        <taxon>Bacillota</taxon>
        <taxon>Clostridia</taxon>
        <taxon>Eubacteriales</taxon>
        <taxon>Clostridiaceae</taxon>
        <taxon>Clostridium</taxon>
    </lineage>
</organism>
<sequence>MKDQYKVLYDPIKIGKLEIKNRYVLAPMGPGGMCNADGSFNKRGIEFYVERAKGGTGLIMTGVTMVENNIEKCALPSMPCPTINPLNFITTGNEMTERVHAYGAKIFLQLSAGFGRVSIPSIVGKVAVAPSKIPHRFLPGVTCRELTTEEVKEYVKAFGESAEIAKKAGFDGVEIHAVHEGYLLDQFAISFFNHRTDEYGGSLENRLRFACEVVQEIKKRCGQDFPVSLRYSIKSFIKDWCKGGLPDEEFEEKGRDIPEGIEAAKILVAAGYDALNGDVGSYDSWYWSHPPMYQKKGLYLPYNEILKKVVDVPIITAGRMEDPELSSDAILSGKTDMIALGRPLLADAEIPNKIFEDKYDKVRPCLSCQEGCMGRLQNFATVSCAVNPACGREKEYGLKKAEQIKKVLIVGGGVAGMEAARVAAIRGHKVTLIEKNGYLGGNIVPGGVPDFKDDDRALVKWYEGILKDLGVEIKLNVAASKENIKEFGADEVLLATGSSPRTLTIEGADKVYSAEDVLMERKNVGEKVIIIGGGLVGCETALWLKQQGKEVTIVEMQNDILQVGGPLCHANHDMLIDLIKFNKIDVKASSYISKKTDEGFVLNTNGEESIINADSAVVAIGYLSEKDLYSEVRFDIPNARLIGDANKVQNIMYAIWSAYEVAKNI</sequence>
<accession>G9F1Y9</accession>
<feature type="chain" id="PRO_0000423008" description="Cinnamate reductase">
    <location>
        <begin position="1"/>
        <end position="665"/>
    </location>
</feature>
<feature type="active site" description="Proton donor" evidence="1">
    <location>
        <position position="182"/>
    </location>
</feature>
<feature type="binding site" evidence="1">
    <location>
        <position position="109"/>
    </location>
    <ligand>
        <name>FMN</name>
        <dbReference type="ChEBI" id="CHEBI:58210"/>
    </ligand>
</feature>
<feature type="binding site" evidence="1">
    <location>
        <position position="230"/>
    </location>
    <ligand>
        <name>FMN</name>
        <dbReference type="ChEBI" id="CHEBI:58210"/>
    </ligand>
</feature>
<feature type="binding site" evidence="1">
    <location>
        <position position="319"/>
    </location>
    <ligand>
        <name>FMN</name>
        <dbReference type="ChEBI" id="CHEBI:58210"/>
    </ligand>
</feature>
<feature type="binding site" evidence="1">
    <location>
        <begin position="341"/>
        <end position="342"/>
    </location>
    <ligand>
        <name>FMN</name>
        <dbReference type="ChEBI" id="CHEBI:58210"/>
    </ligand>
</feature>
<feature type="binding site" evidence="1">
    <location>
        <position position="365"/>
    </location>
    <ligand>
        <name>[4Fe-4S] cluster</name>
        <dbReference type="ChEBI" id="CHEBI:49883"/>
    </ligand>
</feature>
<feature type="binding site" evidence="1">
    <location>
        <position position="368"/>
    </location>
    <ligand>
        <name>[4Fe-4S] cluster</name>
        <dbReference type="ChEBI" id="CHEBI:49883"/>
    </ligand>
</feature>
<feature type="binding site" evidence="1">
    <location>
        <position position="372"/>
    </location>
    <ligand>
        <name>[4Fe-4S] cluster</name>
        <dbReference type="ChEBI" id="CHEBI:49883"/>
    </ligand>
</feature>
<feature type="binding site" evidence="1">
    <location>
        <position position="384"/>
    </location>
    <ligand>
        <name>[4Fe-4S] cluster</name>
        <dbReference type="ChEBI" id="CHEBI:49883"/>
    </ligand>
</feature>
<feature type="binding site" evidence="1">
    <location>
        <position position="415"/>
    </location>
    <ligand>
        <name>FAD</name>
        <dbReference type="ChEBI" id="CHEBI:57692"/>
    </ligand>
</feature>
<feature type="binding site" evidence="1">
    <location>
        <position position="434"/>
    </location>
    <ligand>
        <name>FAD</name>
        <dbReference type="ChEBI" id="CHEBI:57692"/>
    </ligand>
</feature>
<feature type="binding site" evidence="1">
    <location>
        <position position="442"/>
    </location>
    <ligand>
        <name>FAD</name>
        <dbReference type="ChEBI" id="CHEBI:57692"/>
    </ligand>
</feature>
<feature type="binding site" evidence="1">
    <location>
        <position position="452"/>
    </location>
    <ligand>
        <name>FAD</name>
        <dbReference type="ChEBI" id="CHEBI:57692"/>
    </ligand>
</feature>
<feature type="binding site" evidence="1">
    <location>
        <position position="479"/>
    </location>
    <ligand>
        <name>FAD</name>
        <dbReference type="ChEBI" id="CHEBI:57692"/>
    </ligand>
</feature>
<proteinExistence type="evidence at protein level"/>
<keyword id="KW-0903">Direct protein sequencing</keyword>
<keyword id="KW-0274">FAD</keyword>
<keyword id="KW-0285">Flavoprotein</keyword>
<keyword id="KW-0288">FMN</keyword>
<keyword id="KW-0408">Iron</keyword>
<keyword id="KW-0411">Iron-sulfur</keyword>
<keyword id="KW-0479">Metal-binding</keyword>
<keyword id="KW-0520">NAD</keyword>
<keyword id="KW-0560">Oxidoreductase</keyword>
<evidence type="ECO:0000250" key="1">
    <source>
        <dbReference type="UniProtKB" id="P42593"/>
    </source>
</evidence>
<evidence type="ECO:0000269" key="2">
    <source>
    </source>
</evidence>
<evidence type="ECO:0000303" key="3">
    <source>
    </source>
</evidence>
<evidence type="ECO:0000305" key="4"/>
<evidence type="ECO:0000305" key="5">
    <source>
    </source>
</evidence>
<protein>
    <recommendedName>
        <fullName evidence="3">Cinnamate reductase</fullName>
        <ecNumber evidence="2">1.3.1.-</ecNumber>
    </recommendedName>
</protein>
<comment type="function">
    <text evidence="2">Involved in the fermentation of L-phenylalanine via a Stickland reaction. Catalyzes the reduction of (E)-cinnamate to yield 3-phenylpropionate.</text>
</comment>
<comment type="catalytic activity">
    <reaction evidence="2">
        <text>3-phenylpropanoate + NAD(+) = (E)-cinnamate + NADH + H(+)</text>
        <dbReference type="Rhea" id="RHEA:50944"/>
        <dbReference type="ChEBI" id="CHEBI:15378"/>
        <dbReference type="ChEBI" id="CHEBI:15669"/>
        <dbReference type="ChEBI" id="CHEBI:51057"/>
        <dbReference type="ChEBI" id="CHEBI:57540"/>
        <dbReference type="ChEBI" id="CHEBI:57945"/>
    </reaction>
</comment>
<comment type="cofactor">
    <cofactor evidence="1">
        <name>FMN</name>
        <dbReference type="ChEBI" id="CHEBI:58210"/>
    </cofactor>
</comment>
<comment type="cofactor">
    <cofactor evidence="1">
        <name>FAD</name>
        <dbReference type="ChEBI" id="CHEBI:57692"/>
    </cofactor>
</comment>
<comment type="cofactor">
    <cofactor evidence="1">
        <name>[4Fe-4S] cluster</name>
        <dbReference type="ChEBI" id="CHEBI:49883"/>
    </cofactor>
</comment>
<comment type="pathway">
    <text evidence="5">Amino-acid degradation; L-phenylalanine degradation.</text>
</comment>
<comment type="similarity">
    <text evidence="4">In the N-terminal section; belongs to the NADH:flavin oxidoreductase/NADH oxidase family.</text>
</comment>